<comment type="function">
    <text evidence="1">Converts seryl-tRNA(Sec) to selenocysteinyl-tRNA(Sec) required for selenoprotein biosynthesis.</text>
</comment>
<comment type="catalytic activity">
    <reaction evidence="1">
        <text>L-seryl-tRNA(Sec) + selenophosphate + H(+) = L-selenocysteinyl-tRNA(Sec) + phosphate</text>
        <dbReference type="Rhea" id="RHEA:22728"/>
        <dbReference type="Rhea" id="RHEA-COMP:9742"/>
        <dbReference type="Rhea" id="RHEA-COMP:9743"/>
        <dbReference type="ChEBI" id="CHEBI:15378"/>
        <dbReference type="ChEBI" id="CHEBI:16144"/>
        <dbReference type="ChEBI" id="CHEBI:43474"/>
        <dbReference type="ChEBI" id="CHEBI:78533"/>
        <dbReference type="ChEBI" id="CHEBI:78573"/>
        <dbReference type="EC" id="2.9.1.1"/>
    </reaction>
</comment>
<comment type="cofactor">
    <cofactor evidence="1">
        <name>pyridoxal 5'-phosphate</name>
        <dbReference type="ChEBI" id="CHEBI:597326"/>
    </cofactor>
</comment>
<comment type="pathway">
    <text evidence="1">Aminoacyl-tRNA biosynthesis; selenocysteinyl-tRNA(Sec) biosynthesis; selenocysteinyl-tRNA(Sec) from L-seryl-tRNA(Sec) (bacterial route): step 1/1.</text>
</comment>
<comment type="subunit">
    <text evidence="1">Homodecamer; pentamer of dimers. Binds only one seryl-tRNA(Sec) per dimer.</text>
</comment>
<comment type="subcellular location">
    <subcellularLocation>
        <location evidence="1">Cytoplasm</location>
    </subcellularLocation>
</comment>
<comment type="similarity">
    <text evidence="1">Belongs to the SelA family.</text>
</comment>
<reference key="1">
    <citation type="journal article" date="2009" name="PLoS Genet.">
        <title>Organised genome dynamics in the Escherichia coli species results in highly diverse adaptive paths.</title>
        <authorList>
            <person name="Touchon M."/>
            <person name="Hoede C."/>
            <person name="Tenaillon O."/>
            <person name="Barbe V."/>
            <person name="Baeriswyl S."/>
            <person name="Bidet P."/>
            <person name="Bingen E."/>
            <person name="Bonacorsi S."/>
            <person name="Bouchier C."/>
            <person name="Bouvet O."/>
            <person name="Calteau A."/>
            <person name="Chiapello H."/>
            <person name="Clermont O."/>
            <person name="Cruveiller S."/>
            <person name="Danchin A."/>
            <person name="Diard M."/>
            <person name="Dossat C."/>
            <person name="Karoui M.E."/>
            <person name="Frapy E."/>
            <person name="Garry L."/>
            <person name="Ghigo J.M."/>
            <person name="Gilles A.M."/>
            <person name="Johnson J."/>
            <person name="Le Bouguenec C."/>
            <person name="Lescat M."/>
            <person name="Mangenot S."/>
            <person name="Martinez-Jehanne V."/>
            <person name="Matic I."/>
            <person name="Nassif X."/>
            <person name="Oztas S."/>
            <person name="Petit M.A."/>
            <person name="Pichon C."/>
            <person name="Rouy Z."/>
            <person name="Ruf C.S."/>
            <person name="Schneider D."/>
            <person name="Tourret J."/>
            <person name="Vacherie B."/>
            <person name="Vallenet D."/>
            <person name="Medigue C."/>
            <person name="Rocha E.P.C."/>
            <person name="Denamur E."/>
        </authorList>
    </citation>
    <scope>NUCLEOTIDE SEQUENCE [LARGE SCALE GENOMIC DNA]</scope>
    <source>
        <strain>IAI39 / ExPEC</strain>
    </source>
</reference>
<organism>
    <name type="scientific">Escherichia coli O7:K1 (strain IAI39 / ExPEC)</name>
    <dbReference type="NCBI Taxonomy" id="585057"/>
    <lineage>
        <taxon>Bacteria</taxon>
        <taxon>Pseudomonadati</taxon>
        <taxon>Pseudomonadota</taxon>
        <taxon>Gammaproteobacteria</taxon>
        <taxon>Enterobacterales</taxon>
        <taxon>Enterobacteriaceae</taxon>
        <taxon>Escherichia</taxon>
    </lineage>
</organism>
<evidence type="ECO:0000255" key="1">
    <source>
        <dbReference type="HAMAP-Rule" id="MF_00423"/>
    </source>
</evidence>
<dbReference type="EC" id="2.9.1.1" evidence="1"/>
<dbReference type="EMBL" id="CU928164">
    <property type="protein sequence ID" value="CAR20217.1"/>
    <property type="molecule type" value="Genomic_DNA"/>
</dbReference>
<dbReference type="RefSeq" id="WP_000206258.1">
    <property type="nucleotide sequence ID" value="NC_011750.1"/>
</dbReference>
<dbReference type="RefSeq" id="YP_002409990.1">
    <property type="nucleotide sequence ID" value="NC_011750.1"/>
</dbReference>
<dbReference type="SMR" id="B7NP97"/>
<dbReference type="STRING" id="585057.ECIAI39_4109"/>
<dbReference type="KEGG" id="ect:ECIAI39_4109"/>
<dbReference type="PATRIC" id="fig|585057.6.peg.4261"/>
<dbReference type="HOGENOM" id="CLU_038142_1_0_6"/>
<dbReference type="UniPathway" id="UPA00906">
    <property type="reaction ID" value="UER00896"/>
</dbReference>
<dbReference type="Proteomes" id="UP000000749">
    <property type="component" value="Chromosome"/>
</dbReference>
<dbReference type="GO" id="GO:0005737">
    <property type="term" value="C:cytoplasm"/>
    <property type="evidence" value="ECO:0007669"/>
    <property type="project" value="UniProtKB-SubCell"/>
</dbReference>
<dbReference type="GO" id="GO:0004125">
    <property type="term" value="F:L-seryl-tRNA(Sec) selenium transferase activity"/>
    <property type="evidence" value="ECO:0007669"/>
    <property type="project" value="UniProtKB-UniRule"/>
</dbReference>
<dbReference type="GO" id="GO:0001717">
    <property type="term" value="P:conversion of seryl-tRNAsec to selenocys-tRNAsec"/>
    <property type="evidence" value="ECO:0007669"/>
    <property type="project" value="UniProtKB-UniRule"/>
</dbReference>
<dbReference type="GO" id="GO:0001514">
    <property type="term" value="P:selenocysteine incorporation"/>
    <property type="evidence" value="ECO:0007669"/>
    <property type="project" value="UniProtKB-UniRule"/>
</dbReference>
<dbReference type="FunFam" id="3.40.640.10:FF:000028">
    <property type="entry name" value="L-seryl-tRNA(Sec) selenium transferase"/>
    <property type="match status" value="1"/>
</dbReference>
<dbReference type="FunFam" id="3.90.1150.180:FF:000001">
    <property type="entry name" value="L-seryl-tRNA(Sec) selenium transferase"/>
    <property type="match status" value="1"/>
</dbReference>
<dbReference type="Gene3D" id="3.90.1150.180">
    <property type="match status" value="1"/>
</dbReference>
<dbReference type="Gene3D" id="3.40.640.10">
    <property type="entry name" value="Type I PLP-dependent aspartate aminotransferase-like (Major domain)"/>
    <property type="match status" value="1"/>
</dbReference>
<dbReference type="HAMAP" id="MF_00423">
    <property type="entry name" value="SelA"/>
    <property type="match status" value="1"/>
</dbReference>
<dbReference type="InterPro" id="IPR015424">
    <property type="entry name" value="PyrdxlP-dep_Trfase"/>
</dbReference>
<dbReference type="InterPro" id="IPR015421">
    <property type="entry name" value="PyrdxlP-dep_Trfase_major"/>
</dbReference>
<dbReference type="InterPro" id="IPR018319">
    <property type="entry name" value="SelA-like"/>
</dbReference>
<dbReference type="InterPro" id="IPR004534">
    <property type="entry name" value="SelA_trans"/>
</dbReference>
<dbReference type="InterPro" id="IPR025862">
    <property type="entry name" value="SelA_trans_N_dom"/>
</dbReference>
<dbReference type="NCBIfam" id="TIGR00474">
    <property type="entry name" value="selA"/>
    <property type="match status" value="1"/>
</dbReference>
<dbReference type="PANTHER" id="PTHR32328">
    <property type="entry name" value="L-SERYL-TRNA(SEC) SELENIUM TRANSFERASE"/>
    <property type="match status" value="1"/>
</dbReference>
<dbReference type="PANTHER" id="PTHR32328:SF0">
    <property type="entry name" value="L-SERYL-TRNA(SEC) SELENIUM TRANSFERASE"/>
    <property type="match status" value="1"/>
</dbReference>
<dbReference type="Pfam" id="PF12390">
    <property type="entry name" value="Se-cys_synth_N"/>
    <property type="match status" value="1"/>
</dbReference>
<dbReference type="Pfam" id="PF03841">
    <property type="entry name" value="SelA"/>
    <property type="match status" value="1"/>
</dbReference>
<dbReference type="SUPFAM" id="SSF53383">
    <property type="entry name" value="PLP-dependent transferases"/>
    <property type="match status" value="1"/>
</dbReference>
<proteinExistence type="inferred from homology"/>
<feature type="chain" id="PRO_1000124139" description="L-seryl-tRNA(Sec) selenium transferase">
    <location>
        <begin position="1"/>
        <end position="463"/>
    </location>
</feature>
<feature type="modified residue" description="N6-(pyridoxal phosphate)lysine" evidence="1">
    <location>
        <position position="295"/>
    </location>
</feature>
<protein>
    <recommendedName>
        <fullName evidence="1">L-seryl-tRNA(Sec) selenium transferase</fullName>
        <ecNumber evidence="1">2.9.1.1</ecNumber>
    </recommendedName>
    <alternativeName>
        <fullName evidence="1">Selenocysteine synthase</fullName>
        <shortName evidence="1">Sec synthase</shortName>
    </alternativeName>
    <alternativeName>
        <fullName evidence="1">Selenocysteinyl-tRNA(Sec) synthase</fullName>
    </alternativeName>
</protein>
<name>SELA_ECO7I</name>
<keyword id="KW-0963">Cytoplasm</keyword>
<keyword id="KW-0648">Protein biosynthesis</keyword>
<keyword id="KW-0663">Pyridoxal phosphate</keyword>
<keyword id="KW-0711">Selenium</keyword>
<keyword id="KW-0808">Transferase</keyword>
<gene>
    <name evidence="1" type="primary">selA</name>
    <name type="ordered locus">ECIAI39_4109</name>
</gene>
<sequence>MTTETRSLYSQLPAIDRLLRDSSFLSLRDTYGHTRVVELLRQMLDEAREVIRDSQTLPAWCENWAQEVDARLTKEAQSALRPVINLTGTVLHTNLGRALQAEAAVEAVTKAMRSPVTLEYDLDDAGRGHRDRALAQLLCRITGAEDACIVNNNAAAVLLMLAATASGKEVVVSRGELVEIGGAFRIPDVMRQAGCTLHEVGTTNRTHANDYRQAVNENTALLMKVHTSNYSIQGFTKAIDEAELVALGKELDIPVVTDLGSGSLVDLSQYGLPKEPMPQELIAAGVSLVSFSGDKLLGGPQAGIIVGKKEMIARLQSHPLKRALRADKMTLAALEATLRLYLHPEALSKKLPTLRLLTRSAEVIQIQAQRLQAPLAAHYGAEFAVQVMPCLSQIGSGSLPVDRLPSAALTFTPHDGRGSHLESLAARWRELPVPVIGRIYDGRLWLDLRCLEDEQRFLEMLLK</sequence>
<accession>B7NP97</accession>